<reference key="1">
    <citation type="submission" date="2005-03" db="EMBL/GenBank/DDBJ databases">
        <authorList>
            <consortium name="NIH - Xenopus Gene Collection (XGC) project"/>
        </authorList>
    </citation>
    <scope>NUCLEOTIDE SEQUENCE [LARGE SCALE MRNA]</scope>
</reference>
<organism>
    <name type="scientific">Xenopus tropicalis</name>
    <name type="common">Western clawed frog</name>
    <name type="synonym">Silurana tropicalis</name>
    <dbReference type="NCBI Taxonomy" id="8364"/>
    <lineage>
        <taxon>Eukaryota</taxon>
        <taxon>Metazoa</taxon>
        <taxon>Chordata</taxon>
        <taxon>Craniata</taxon>
        <taxon>Vertebrata</taxon>
        <taxon>Euteleostomi</taxon>
        <taxon>Amphibia</taxon>
        <taxon>Batrachia</taxon>
        <taxon>Anura</taxon>
        <taxon>Pipoidea</taxon>
        <taxon>Pipidae</taxon>
        <taxon>Xenopodinae</taxon>
        <taxon>Xenopus</taxon>
        <taxon>Silurana</taxon>
    </lineage>
</organism>
<accession>Q5BIZ2</accession>
<sequence>MKFQYKEDHPFEYRKKEGEKIRKKYPDRVPVIVEKAPKARVPDLDKRKYLVPSDLTVGQFYFLIRKRIHLRPEDALFFFVNNTIPPTSATMGQLYEDNHEEDYFLYVAYSDESVYGK</sequence>
<evidence type="ECO:0000250" key="1">
    <source>
        <dbReference type="UniProtKB" id="Q0VGK0"/>
    </source>
</evidence>
<evidence type="ECO:0000250" key="2">
    <source>
        <dbReference type="UniProtKB" id="Q9H0R8"/>
    </source>
</evidence>
<evidence type="ECO:0000305" key="3"/>
<feature type="chain" id="PRO_0000438281" description="Gamma-aminobutyric acid receptor-associated protein-like 1">
    <location>
        <begin position="1"/>
        <end position="116"/>
    </location>
</feature>
<feature type="propeptide" id="PRO_0000342412" description="Removed in mature form">
    <location>
        <position position="117"/>
    </location>
</feature>
<feature type="site" description="Cleavage; by ATG4B" evidence="2">
    <location>
        <begin position="116"/>
        <end position="117"/>
    </location>
</feature>
<feature type="lipid moiety-binding region" description="Phosphatidylethanolamine amidated glycine; alternate" evidence="2">
    <location>
        <position position="116"/>
    </location>
</feature>
<feature type="lipid moiety-binding region" description="Phosphatidylserine amidated glycine; alternate" evidence="2">
    <location>
        <position position="116"/>
    </location>
</feature>
<dbReference type="EMBL" id="BC091701">
    <property type="protein sequence ID" value="AAH91701.1"/>
    <property type="molecule type" value="mRNA"/>
</dbReference>
<dbReference type="RefSeq" id="NP_001025652.1">
    <property type="nucleotide sequence ID" value="NM_001030481.1"/>
</dbReference>
<dbReference type="BMRB" id="Q5BIZ2"/>
<dbReference type="SMR" id="Q5BIZ2"/>
<dbReference type="FunCoup" id="Q5BIZ2">
    <property type="interactions" value="1436"/>
</dbReference>
<dbReference type="STRING" id="8364.ENSXETP00000031780"/>
<dbReference type="PaxDb" id="8364-ENSXETP00000035464"/>
<dbReference type="DNASU" id="595040"/>
<dbReference type="GeneID" id="595040"/>
<dbReference type="KEGG" id="xtr:595040"/>
<dbReference type="AGR" id="Xenbase:XB-GENE-946688"/>
<dbReference type="CTD" id="23710"/>
<dbReference type="Xenbase" id="XB-GENE-946688">
    <property type="gene designation" value="gabarapl1"/>
</dbReference>
<dbReference type="eggNOG" id="KOG1654">
    <property type="taxonomic scope" value="Eukaryota"/>
</dbReference>
<dbReference type="HOGENOM" id="CLU_119276_0_0_1"/>
<dbReference type="InParanoid" id="Q5BIZ2"/>
<dbReference type="OMA" id="KNQIRAK"/>
<dbReference type="OrthoDB" id="6738456at2759"/>
<dbReference type="PhylomeDB" id="Q5BIZ2"/>
<dbReference type="Reactome" id="R-XTR-1632852">
    <property type="pathway name" value="Macroautophagy"/>
</dbReference>
<dbReference type="Proteomes" id="UP000008143">
    <property type="component" value="Chromosome 7"/>
</dbReference>
<dbReference type="Bgee" id="ENSXETG00000016242">
    <property type="expression patterns" value="Expressed in brain and 16 other cell types or tissues"/>
</dbReference>
<dbReference type="GO" id="GO:0005776">
    <property type="term" value="C:autophagosome"/>
    <property type="evidence" value="ECO:0007669"/>
    <property type="project" value="UniProtKB-SubCell"/>
</dbReference>
<dbReference type="GO" id="GO:0030659">
    <property type="term" value="C:cytoplasmic vesicle membrane"/>
    <property type="evidence" value="ECO:0007669"/>
    <property type="project" value="UniProtKB-SubCell"/>
</dbReference>
<dbReference type="GO" id="GO:0005783">
    <property type="term" value="C:endoplasmic reticulum"/>
    <property type="evidence" value="ECO:0007669"/>
    <property type="project" value="UniProtKB-SubCell"/>
</dbReference>
<dbReference type="GO" id="GO:0005794">
    <property type="term" value="C:Golgi apparatus"/>
    <property type="evidence" value="ECO:0007669"/>
    <property type="project" value="UniProtKB-SubCell"/>
</dbReference>
<dbReference type="GO" id="GO:0005874">
    <property type="term" value="C:microtubule"/>
    <property type="evidence" value="ECO:0007669"/>
    <property type="project" value="UniProtKB-KW"/>
</dbReference>
<dbReference type="GO" id="GO:0006914">
    <property type="term" value="P:autophagy"/>
    <property type="evidence" value="ECO:0007669"/>
    <property type="project" value="UniProtKB-KW"/>
</dbReference>
<dbReference type="CDD" id="cd16127">
    <property type="entry name" value="Ubl_ATG8_GABARAP_like"/>
    <property type="match status" value="1"/>
</dbReference>
<dbReference type="FunFam" id="3.10.20.90:FF:000037">
    <property type="entry name" value="Gamma-aminobutyric acid receptor-associated protein-like 1"/>
    <property type="match status" value="1"/>
</dbReference>
<dbReference type="Gene3D" id="3.10.20.90">
    <property type="entry name" value="Phosphatidylinositol 3-kinase Catalytic Subunit, Chain A, domain 1"/>
    <property type="match status" value="1"/>
</dbReference>
<dbReference type="InterPro" id="IPR004241">
    <property type="entry name" value="Atg8-like"/>
</dbReference>
<dbReference type="InterPro" id="IPR029071">
    <property type="entry name" value="Ubiquitin-like_domsf"/>
</dbReference>
<dbReference type="PANTHER" id="PTHR10969">
    <property type="entry name" value="MICROTUBULE-ASSOCIATED PROTEINS 1A/1B LIGHT CHAIN 3-RELATED"/>
    <property type="match status" value="1"/>
</dbReference>
<dbReference type="Pfam" id="PF02991">
    <property type="entry name" value="ATG8"/>
    <property type="match status" value="1"/>
</dbReference>
<dbReference type="SUPFAM" id="SSF54236">
    <property type="entry name" value="Ubiquitin-like"/>
    <property type="match status" value="1"/>
</dbReference>
<keyword id="KW-0072">Autophagy</keyword>
<keyword id="KW-0963">Cytoplasm</keyword>
<keyword id="KW-0968">Cytoplasmic vesicle</keyword>
<keyword id="KW-0206">Cytoskeleton</keyword>
<keyword id="KW-0256">Endoplasmic reticulum</keyword>
<keyword id="KW-0333">Golgi apparatus</keyword>
<keyword id="KW-0449">Lipoprotein</keyword>
<keyword id="KW-0472">Membrane</keyword>
<keyword id="KW-0493">Microtubule</keyword>
<keyword id="KW-1185">Reference proteome</keyword>
<gene>
    <name type="primary">gabarapl1</name>
</gene>
<name>GBRL1_XENTR</name>
<proteinExistence type="inferred from homology"/>
<comment type="function">
    <text evidence="2">Ubiquitin-like modifier that increases cell-surface expression of kappa-type opioid receptor through facilitating anterograde intracellular trafficking of the receptor. Involved in formation of autophagosomal vacuoles. While LC3s are involved in elongation of the phagophore membrane, the GABARAP/GATE-16 subfamily is essential for a later stage in autophagosome maturation.</text>
</comment>
<comment type="subcellular location">
    <subcellularLocation>
        <location evidence="2">Cytoplasmic vesicle</location>
        <location evidence="2">Autophagosome</location>
    </subcellularLocation>
    <subcellularLocation>
        <location evidence="2">Cytoplasmic vesicle membrane</location>
        <topology evidence="2">Lipid-anchor</topology>
    </subcellularLocation>
    <subcellularLocation>
        <location evidence="1">Cytoplasm</location>
        <location evidence="1">Cytoskeleton</location>
    </subcellularLocation>
    <subcellularLocation>
        <location evidence="1">Endoplasmic reticulum</location>
    </subcellularLocation>
    <subcellularLocation>
        <location evidence="1">Golgi apparatus</location>
    </subcellularLocation>
</comment>
<comment type="PTM">
    <text evidence="2">The precursor molecule is cleaved by ATG4 (atg4a, atg4b, atg4c or atg4d) to expose the glycine at the C-terminus and form the cytosolic form, gabarapl1-I. The processed form is then activated by apg7l/atg7, transferred to atg3 and conjugated to phosphatidylethanolamine (PE) phospholipid to form the membrane-bound form, gabarapl1-II. During non-canonical autophagy, the processed form is conjugated to phosphatidylserine (PS) phospholipid. Atg4 proteins also mediate the delipidation of PE-conjugated forms required for gabarapl1 recycling when autophagosomes fuse with lysosomes. In addition, some atg4 proteins mediate delipidation of ATG8 proteins conjugated to PS during non-canonical autophagy.</text>
</comment>
<comment type="similarity">
    <text evidence="3">Belongs to the ATG8 family.</text>
</comment>
<protein>
    <recommendedName>
        <fullName>Gamma-aminobutyric acid receptor-associated protein-like 1</fullName>
    </recommendedName>
    <alternativeName>
        <fullName>GABA(A) receptor-associated protein-like 1</fullName>
    </alternativeName>
</protein>